<dbReference type="EMBL" id="AE005674">
    <property type="protein sequence ID" value="AAN45292.1"/>
    <property type="molecule type" value="Genomic_DNA"/>
</dbReference>
<dbReference type="EMBL" id="AE014073">
    <property type="protein sequence ID" value="AAP18905.1"/>
    <property type="molecule type" value="Genomic_DNA"/>
</dbReference>
<dbReference type="RefSeq" id="NP_709585.1">
    <property type="nucleotide sequence ID" value="NC_004337.2"/>
</dbReference>
<dbReference type="RefSeq" id="WP_001295255.1">
    <property type="nucleotide sequence ID" value="NZ_WPGW01000028.1"/>
</dbReference>
<dbReference type="STRING" id="198214.SF3855"/>
<dbReference type="PaxDb" id="198214-SF3855"/>
<dbReference type="GeneID" id="1026016"/>
<dbReference type="GeneID" id="93778162"/>
<dbReference type="KEGG" id="sfl:SF3855"/>
<dbReference type="KEGG" id="sfx:S3904"/>
<dbReference type="PATRIC" id="fig|623.157.peg.259"/>
<dbReference type="HOGENOM" id="CLU_3381617_0_0_6"/>
<dbReference type="Proteomes" id="UP000001006">
    <property type="component" value="Chromosome"/>
</dbReference>
<dbReference type="Proteomes" id="UP000002673">
    <property type="component" value="Chromosome"/>
</dbReference>
<dbReference type="NCBIfam" id="NF007433">
    <property type="entry name" value="PRK09979.1"/>
    <property type="match status" value="1"/>
</dbReference>
<gene>
    <name type="primary">rhoL</name>
    <name type="ordered locus">SF3855</name>
    <name type="ordered locus">S3904</name>
</gene>
<feature type="peptide" id="PRO_0000045081" description="rho operon leader peptide">
    <location>
        <begin position="1"/>
        <end position="33"/>
    </location>
</feature>
<feature type="region of interest" description="Disordered" evidence="1">
    <location>
        <begin position="1"/>
        <end position="33"/>
    </location>
</feature>
<feature type="compositionally biased region" description="Polar residues" evidence="1">
    <location>
        <begin position="1"/>
        <end position="25"/>
    </location>
</feature>
<name>LPRH_SHIFL</name>
<reference key="1">
    <citation type="journal article" date="2002" name="Nucleic Acids Res.">
        <title>Genome sequence of Shigella flexneri 2a: insights into pathogenicity through comparison with genomes of Escherichia coli K12 and O157.</title>
        <authorList>
            <person name="Jin Q."/>
            <person name="Yuan Z."/>
            <person name="Xu J."/>
            <person name="Wang Y."/>
            <person name="Shen Y."/>
            <person name="Lu W."/>
            <person name="Wang J."/>
            <person name="Liu H."/>
            <person name="Yang J."/>
            <person name="Yang F."/>
            <person name="Zhang X."/>
            <person name="Zhang J."/>
            <person name="Yang G."/>
            <person name="Wu H."/>
            <person name="Qu D."/>
            <person name="Dong J."/>
            <person name="Sun L."/>
            <person name="Xue Y."/>
            <person name="Zhao A."/>
            <person name="Gao Y."/>
            <person name="Zhu J."/>
            <person name="Kan B."/>
            <person name="Ding K."/>
            <person name="Chen S."/>
            <person name="Cheng H."/>
            <person name="Yao Z."/>
            <person name="He B."/>
            <person name="Chen R."/>
            <person name="Ma D."/>
            <person name="Qiang B."/>
            <person name="Wen Y."/>
            <person name="Hou Y."/>
            <person name="Yu J."/>
        </authorList>
    </citation>
    <scope>NUCLEOTIDE SEQUENCE [LARGE SCALE GENOMIC DNA]</scope>
    <source>
        <strain>301 / Serotype 2a</strain>
    </source>
</reference>
<reference key="2">
    <citation type="journal article" date="2003" name="Infect. Immun.">
        <title>Complete genome sequence and comparative genomics of Shigella flexneri serotype 2a strain 2457T.</title>
        <authorList>
            <person name="Wei J."/>
            <person name="Goldberg M.B."/>
            <person name="Burland V."/>
            <person name="Venkatesan M.M."/>
            <person name="Deng W."/>
            <person name="Fournier G."/>
            <person name="Mayhew G.F."/>
            <person name="Plunkett G. III"/>
            <person name="Rose D.J."/>
            <person name="Darling A."/>
            <person name="Mau B."/>
            <person name="Perna N.T."/>
            <person name="Payne S.M."/>
            <person name="Runyen-Janecky L.J."/>
            <person name="Zhou S."/>
            <person name="Schwartz D.C."/>
            <person name="Blattner F.R."/>
        </authorList>
    </citation>
    <scope>NUCLEOTIDE SEQUENCE [LARGE SCALE GENOMIC DNA]</scope>
    <source>
        <strain>ATCC 700930 / 2457T / Serotype 2a</strain>
    </source>
</reference>
<organism>
    <name type="scientific">Shigella flexneri</name>
    <dbReference type="NCBI Taxonomy" id="623"/>
    <lineage>
        <taxon>Bacteria</taxon>
        <taxon>Pseudomonadati</taxon>
        <taxon>Pseudomonadota</taxon>
        <taxon>Gammaproteobacteria</taxon>
        <taxon>Enterobacterales</taxon>
        <taxon>Enterobacteriaceae</taxon>
        <taxon>Shigella</taxon>
    </lineage>
</organism>
<accession>P0ADF5</accession>
<accession>P37324</accession>
<keyword id="KW-0428">Leader peptide</keyword>
<keyword id="KW-1185">Reference proteome</keyword>
<protein>
    <recommendedName>
        <fullName>rho operon leader peptide</fullName>
    </recommendedName>
</protein>
<evidence type="ECO:0000256" key="1">
    <source>
        <dbReference type="SAM" id="MobiDB-lite"/>
    </source>
</evidence>
<proteinExistence type="predicted"/>
<sequence length="33" mass="3750">MRSEQISGSSLNPSCRFSSAYSPVTRQRKDMSR</sequence>